<name>PDXT_KORCO</name>
<keyword id="KW-0315">Glutamine amidotransferase</keyword>
<keyword id="KW-0378">Hydrolase</keyword>
<keyword id="KW-0456">Lyase</keyword>
<keyword id="KW-0663">Pyridoxal phosphate</keyword>
<keyword id="KW-1185">Reference proteome</keyword>
<comment type="function">
    <text evidence="1">Catalyzes the hydrolysis of glutamine to glutamate and ammonia as part of the biosynthesis of pyridoxal 5'-phosphate. The resulting ammonia molecule is channeled to the active site of PdxS.</text>
</comment>
<comment type="catalytic activity">
    <reaction evidence="1">
        <text>aldehydo-D-ribose 5-phosphate + D-glyceraldehyde 3-phosphate + L-glutamine = pyridoxal 5'-phosphate + L-glutamate + phosphate + 3 H2O + H(+)</text>
        <dbReference type="Rhea" id="RHEA:31507"/>
        <dbReference type="ChEBI" id="CHEBI:15377"/>
        <dbReference type="ChEBI" id="CHEBI:15378"/>
        <dbReference type="ChEBI" id="CHEBI:29985"/>
        <dbReference type="ChEBI" id="CHEBI:43474"/>
        <dbReference type="ChEBI" id="CHEBI:58273"/>
        <dbReference type="ChEBI" id="CHEBI:58359"/>
        <dbReference type="ChEBI" id="CHEBI:59776"/>
        <dbReference type="ChEBI" id="CHEBI:597326"/>
        <dbReference type="EC" id="4.3.3.6"/>
    </reaction>
</comment>
<comment type="catalytic activity">
    <reaction evidence="1">
        <text>L-glutamine + H2O = L-glutamate + NH4(+)</text>
        <dbReference type="Rhea" id="RHEA:15889"/>
        <dbReference type="ChEBI" id="CHEBI:15377"/>
        <dbReference type="ChEBI" id="CHEBI:28938"/>
        <dbReference type="ChEBI" id="CHEBI:29985"/>
        <dbReference type="ChEBI" id="CHEBI:58359"/>
        <dbReference type="EC" id="3.5.1.2"/>
    </reaction>
</comment>
<comment type="pathway">
    <text evidence="1">Cofactor biosynthesis; pyridoxal 5'-phosphate biosynthesis.</text>
</comment>
<comment type="subunit">
    <text evidence="1">In the presence of PdxS, forms a dodecamer of heterodimers. Only shows activity in the heterodimer.</text>
</comment>
<comment type="similarity">
    <text evidence="1">Belongs to the glutaminase PdxT/SNO family.</text>
</comment>
<gene>
    <name evidence="1" type="primary">pdxT</name>
    <name type="ordered locus">Kcr_0775</name>
</gene>
<evidence type="ECO:0000255" key="1">
    <source>
        <dbReference type="HAMAP-Rule" id="MF_01615"/>
    </source>
</evidence>
<organism>
    <name type="scientific">Korarchaeum cryptofilum (strain OPF8)</name>
    <dbReference type="NCBI Taxonomy" id="374847"/>
    <lineage>
        <taxon>Archaea</taxon>
        <taxon>Thermoproteota</taxon>
        <taxon>Candidatus Korarchaeia</taxon>
        <taxon>Candidatus Korarchaeales</taxon>
        <taxon>Candidatus Korarchaeaceae</taxon>
        <taxon>Candidatus Korarchaeum</taxon>
    </lineage>
</organism>
<accession>B1L4Z3</accession>
<dbReference type="EC" id="4.3.3.6" evidence="1"/>
<dbReference type="EC" id="3.5.1.2" evidence="1"/>
<dbReference type="EMBL" id="CP000968">
    <property type="protein sequence ID" value="ACB07522.1"/>
    <property type="molecule type" value="Genomic_DNA"/>
</dbReference>
<dbReference type="RefSeq" id="WP_012309419.1">
    <property type="nucleotide sequence ID" value="NC_010482.1"/>
</dbReference>
<dbReference type="SMR" id="B1L4Z3"/>
<dbReference type="FunCoup" id="B1L4Z3">
    <property type="interactions" value="59"/>
</dbReference>
<dbReference type="STRING" id="374847.Kcr_0775"/>
<dbReference type="MEROPS" id="C26.A32"/>
<dbReference type="EnsemblBacteria" id="ACB07522">
    <property type="protein sequence ID" value="ACB07522"/>
    <property type="gene ID" value="Kcr_0775"/>
</dbReference>
<dbReference type="GeneID" id="6094053"/>
<dbReference type="KEGG" id="kcr:Kcr_0775"/>
<dbReference type="eggNOG" id="arCOG00034">
    <property type="taxonomic scope" value="Archaea"/>
</dbReference>
<dbReference type="HOGENOM" id="CLU_069674_2_0_2"/>
<dbReference type="InParanoid" id="B1L4Z3"/>
<dbReference type="OrthoDB" id="26717at2157"/>
<dbReference type="PhylomeDB" id="B1L4Z3"/>
<dbReference type="UniPathway" id="UPA00245"/>
<dbReference type="Proteomes" id="UP000001686">
    <property type="component" value="Chromosome"/>
</dbReference>
<dbReference type="GO" id="GO:0005829">
    <property type="term" value="C:cytosol"/>
    <property type="evidence" value="ECO:0000318"/>
    <property type="project" value="GO_Central"/>
</dbReference>
<dbReference type="GO" id="GO:1903600">
    <property type="term" value="C:glutaminase complex"/>
    <property type="evidence" value="ECO:0000318"/>
    <property type="project" value="GO_Central"/>
</dbReference>
<dbReference type="GO" id="GO:0004359">
    <property type="term" value="F:glutaminase activity"/>
    <property type="evidence" value="ECO:0007669"/>
    <property type="project" value="UniProtKB-UniRule"/>
</dbReference>
<dbReference type="GO" id="GO:0036381">
    <property type="term" value="F:pyridoxal 5'-phosphate synthase (glutamine hydrolysing) activity"/>
    <property type="evidence" value="ECO:0007669"/>
    <property type="project" value="UniProtKB-UniRule"/>
</dbReference>
<dbReference type="GO" id="GO:0006543">
    <property type="term" value="P:glutamine catabolic process"/>
    <property type="evidence" value="ECO:0007669"/>
    <property type="project" value="UniProtKB-UniRule"/>
</dbReference>
<dbReference type="GO" id="GO:0042823">
    <property type="term" value="P:pyridoxal phosphate biosynthetic process"/>
    <property type="evidence" value="ECO:0000318"/>
    <property type="project" value="GO_Central"/>
</dbReference>
<dbReference type="GO" id="GO:0008614">
    <property type="term" value="P:pyridoxine metabolic process"/>
    <property type="evidence" value="ECO:0000318"/>
    <property type="project" value="GO_Central"/>
</dbReference>
<dbReference type="CDD" id="cd01749">
    <property type="entry name" value="GATase1_PB"/>
    <property type="match status" value="1"/>
</dbReference>
<dbReference type="FunFam" id="3.40.50.880:FF:000041">
    <property type="entry name" value="Glutamine amidotransferase subunit pdxT, putative"/>
    <property type="match status" value="1"/>
</dbReference>
<dbReference type="Gene3D" id="3.40.50.880">
    <property type="match status" value="1"/>
</dbReference>
<dbReference type="HAMAP" id="MF_01615">
    <property type="entry name" value="PdxT"/>
    <property type="match status" value="1"/>
</dbReference>
<dbReference type="InterPro" id="IPR029062">
    <property type="entry name" value="Class_I_gatase-like"/>
</dbReference>
<dbReference type="InterPro" id="IPR002161">
    <property type="entry name" value="PdxT/SNO"/>
</dbReference>
<dbReference type="InterPro" id="IPR021196">
    <property type="entry name" value="PdxT/SNO_CS"/>
</dbReference>
<dbReference type="NCBIfam" id="TIGR03800">
    <property type="entry name" value="PLP_synth_Pdx2"/>
    <property type="match status" value="1"/>
</dbReference>
<dbReference type="PANTHER" id="PTHR31559">
    <property type="entry name" value="PYRIDOXAL 5'-PHOSPHATE SYNTHASE SUBUNIT SNO"/>
    <property type="match status" value="1"/>
</dbReference>
<dbReference type="PANTHER" id="PTHR31559:SF0">
    <property type="entry name" value="PYRIDOXAL 5'-PHOSPHATE SYNTHASE SUBUNIT SNO1-RELATED"/>
    <property type="match status" value="1"/>
</dbReference>
<dbReference type="Pfam" id="PF01174">
    <property type="entry name" value="SNO"/>
    <property type="match status" value="1"/>
</dbReference>
<dbReference type="PIRSF" id="PIRSF005639">
    <property type="entry name" value="Glut_amidoT_SNO"/>
    <property type="match status" value="1"/>
</dbReference>
<dbReference type="SUPFAM" id="SSF52317">
    <property type="entry name" value="Class I glutamine amidotransferase-like"/>
    <property type="match status" value="1"/>
</dbReference>
<dbReference type="PROSITE" id="PS01236">
    <property type="entry name" value="PDXT_SNO_1"/>
    <property type="match status" value="1"/>
</dbReference>
<dbReference type="PROSITE" id="PS51130">
    <property type="entry name" value="PDXT_SNO_2"/>
    <property type="match status" value="1"/>
</dbReference>
<reference key="1">
    <citation type="journal article" date="2008" name="Proc. Natl. Acad. Sci. U.S.A.">
        <title>A korarchaeal genome reveals new insights into the evolution of the Archaea.</title>
        <authorList>
            <person name="Elkins J.G."/>
            <person name="Podar M."/>
            <person name="Graham D.E."/>
            <person name="Makarova K.S."/>
            <person name="Wolf Y."/>
            <person name="Randau L."/>
            <person name="Hedlund B.P."/>
            <person name="Brochier-Armanet C."/>
            <person name="Kunin V."/>
            <person name="Anderson I."/>
            <person name="Lapidus A."/>
            <person name="Goltsman E."/>
            <person name="Barry K."/>
            <person name="Koonin E.V."/>
            <person name="Hugenholtz P."/>
            <person name="Kyrpides N."/>
            <person name="Wanner G."/>
            <person name="Richardson P."/>
            <person name="Keller M."/>
            <person name="Stetter K.O."/>
        </authorList>
    </citation>
    <scope>NUCLEOTIDE SEQUENCE [LARGE SCALE GENOMIC DNA]</scope>
    <source>
        <strain>OPF8</strain>
    </source>
</reference>
<sequence>MRIGVLALQGDIEEHEQAIRDSSRSLGFKVDVVRVKRPGDLKGLSGILIPGGESTTIWKLSQGELMLALRDEILNGLPAMGTCAGAIFMAKEVKDRVVGETGQGILGLMDMTVIRNYYGRQRESFEMDLNLEGIGSVRAVFIRAPAIVRIWGKANALSELNGTYPAVIQDNMLALTFHPELTTSKVHEWFLRELVLK</sequence>
<protein>
    <recommendedName>
        <fullName evidence="1">Pyridoxal 5'-phosphate synthase subunit PdxT</fullName>
        <ecNumber evidence="1">4.3.3.6</ecNumber>
    </recommendedName>
    <alternativeName>
        <fullName evidence="1">Pdx2</fullName>
    </alternativeName>
    <alternativeName>
        <fullName evidence="1">Pyridoxal 5'-phosphate synthase glutaminase subunit</fullName>
        <ecNumber evidence="1">3.5.1.2</ecNumber>
    </alternativeName>
</protein>
<proteinExistence type="inferred from homology"/>
<feature type="chain" id="PRO_1000185892" description="Pyridoxal 5'-phosphate synthase subunit PdxT">
    <location>
        <begin position="1"/>
        <end position="197"/>
    </location>
</feature>
<feature type="active site" description="Nucleophile" evidence="1">
    <location>
        <position position="83"/>
    </location>
</feature>
<feature type="active site" description="Charge relay system" evidence="1">
    <location>
        <position position="178"/>
    </location>
</feature>
<feature type="active site" description="Charge relay system" evidence="1">
    <location>
        <position position="180"/>
    </location>
</feature>
<feature type="binding site" evidence="1">
    <location>
        <begin position="52"/>
        <end position="54"/>
    </location>
    <ligand>
        <name>L-glutamine</name>
        <dbReference type="ChEBI" id="CHEBI:58359"/>
    </ligand>
</feature>
<feature type="binding site" evidence="1">
    <location>
        <position position="115"/>
    </location>
    <ligand>
        <name>L-glutamine</name>
        <dbReference type="ChEBI" id="CHEBI:58359"/>
    </ligand>
</feature>
<feature type="binding site" evidence="1">
    <location>
        <begin position="142"/>
        <end position="143"/>
    </location>
    <ligand>
        <name>L-glutamine</name>
        <dbReference type="ChEBI" id="CHEBI:58359"/>
    </ligand>
</feature>